<name>YBEY_XANE5</name>
<protein>
    <recommendedName>
        <fullName evidence="1">Endoribonuclease YbeY</fullName>
        <ecNumber evidence="1">3.1.-.-</ecNumber>
    </recommendedName>
</protein>
<reference key="1">
    <citation type="journal article" date="2005" name="J. Bacteriol.">
        <title>Insights into genome plasticity and pathogenicity of the plant pathogenic Bacterium Xanthomonas campestris pv. vesicatoria revealed by the complete genome sequence.</title>
        <authorList>
            <person name="Thieme F."/>
            <person name="Koebnik R."/>
            <person name="Bekel T."/>
            <person name="Berger C."/>
            <person name="Boch J."/>
            <person name="Buettner D."/>
            <person name="Caldana C."/>
            <person name="Gaigalat L."/>
            <person name="Goesmann A."/>
            <person name="Kay S."/>
            <person name="Kirchner O."/>
            <person name="Lanz C."/>
            <person name="Linke B."/>
            <person name="McHardy A.C."/>
            <person name="Meyer F."/>
            <person name="Mittenhuber G."/>
            <person name="Nies D.H."/>
            <person name="Niesbach-Kloesgen U."/>
            <person name="Patschkowski T."/>
            <person name="Rueckert C."/>
            <person name="Rupp O."/>
            <person name="Schneiker S."/>
            <person name="Schuster S.C."/>
            <person name="Vorhoelter F.J."/>
            <person name="Weber E."/>
            <person name="Puehler A."/>
            <person name="Bonas U."/>
            <person name="Bartels D."/>
            <person name="Kaiser O."/>
        </authorList>
    </citation>
    <scope>NUCLEOTIDE SEQUENCE [LARGE SCALE GENOMIC DNA]</scope>
    <source>
        <strain>85-10</strain>
    </source>
</reference>
<sequence>MTKGPVRLDVAVSYALPRAGLPSAVSFRKWVAAALKGRIREADLAVRVVDEKEGCSLNHHYRGKDYATNVLSFPAELPEGLPKGIKMPLLGDLVICAPVVAREAAEQGKLLAAHYAHLTVHGTLHLLGWDHEDDKEAEAMEQLEREILADLGIDDPYAGEH</sequence>
<evidence type="ECO:0000255" key="1">
    <source>
        <dbReference type="HAMAP-Rule" id="MF_00009"/>
    </source>
</evidence>
<comment type="function">
    <text evidence="1">Single strand-specific metallo-endoribonuclease involved in late-stage 70S ribosome quality control and in maturation of the 3' terminus of the 16S rRNA.</text>
</comment>
<comment type="cofactor">
    <cofactor evidence="1">
        <name>Zn(2+)</name>
        <dbReference type="ChEBI" id="CHEBI:29105"/>
    </cofactor>
    <text evidence="1">Binds 1 zinc ion.</text>
</comment>
<comment type="subcellular location">
    <subcellularLocation>
        <location evidence="1">Cytoplasm</location>
    </subcellularLocation>
</comment>
<comment type="similarity">
    <text evidence="1">Belongs to the endoribonuclease YbeY family.</text>
</comment>
<dbReference type="EC" id="3.1.-.-" evidence="1"/>
<dbReference type="EMBL" id="AM039952">
    <property type="protein sequence ID" value="CAJ24319.1"/>
    <property type="molecule type" value="Genomic_DNA"/>
</dbReference>
<dbReference type="RefSeq" id="WP_008571323.1">
    <property type="nucleotide sequence ID" value="NZ_CP017190.1"/>
</dbReference>
<dbReference type="SMR" id="Q3BS90"/>
<dbReference type="STRING" id="456327.BJD11_09665"/>
<dbReference type="GeneID" id="93991703"/>
<dbReference type="KEGG" id="xcv:XCV2642"/>
<dbReference type="eggNOG" id="COG0319">
    <property type="taxonomic scope" value="Bacteria"/>
</dbReference>
<dbReference type="HOGENOM" id="CLU_106710_0_1_6"/>
<dbReference type="Proteomes" id="UP000007069">
    <property type="component" value="Chromosome"/>
</dbReference>
<dbReference type="GO" id="GO:0005737">
    <property type="term" value="C:cytoplasm"/>
    <property type="evidence" value="ECO:0007669"/>
    <property type="project" value="UniProtKB-SubCell"/>
</dbReference>
<dbReference type="GO" id="GO:0004222">
    <property type="term" value="F:metalloendopeptidase activity"/>
    <property type="evidence" value="ECO:0007669"/>
    <property type="project" value="InterPro"/>
</dbReference>
<dbReference type="GO" id="GO:0004521">
    <property type="term" value="F:RNA endonuclease activity"/>
    <property type="evidence" value="ECO:0007669"/>
    <property type="project" value="UniProtKB-UniRule"/>
</dbReference>
<dbReference type="GO" id="GO:0008270">
    <property type="term" value="F:zinc ion binding"/>
    <property type="evidence" value="ECO:0007669"/>
    <property type="project" value="UniProtKB-UniRule"/>
</dbReference>
<dbReference type="GO" id="GO:0006364">
    <property type="term" value="P:rRNA processing"/>
    <property type="evidence" value="ECO:0007669"/>
    <property type="project" value="UniProtKB-UniRule"/>
</dbReference>
<dbReference type="Gene3D" id="3.40.390.30">
    <property type="entry name" value="Metalloproteases ('zincins'), catalytic domain"/>
    <property type="match status" value="1"/>
</dbReference>
<dbReference type="HAMAP" id="MF_00009">
    <property type="entry name" value="Endoribonucl_YbeY"/>
    <property type="match status" value="1"/>
</dbReference>
<dbReference type="InterPro" id="IPR023091">
    <property type="entry name" value="MetalPrtase_cat_dom_sf_prd"/>
</dbReference>
<dbReference type="InterPro" id="IPR002036">
    <property type="entry name" value="YbeY"/>
</dbReference>
<dbReference type="InterPro" id="IPR020549">
    <property type="entry name" value="YbeY_CS"/>
</dbReference>
<dbReference type="NCBIfam" id="TIGR00043">
    <property type="entry name" value="rRNA maturation RNase YbeY"/>
    <property type="match status" value="1"/>
</dbReference>
<dbReference type="PANTHER" id="PTHR46986">
    <property type="entry name" value="ENDORIBONUCLEASE YBEY, CHLOROPLASTIC"/>
    <property type="match status" value="1"/>
</dbReference>
<dbReference type="PANTHER" id="PTHR46986:SF1">
    <property type="entry name" value="ENDORIBONUCLEASE YBEY, CHLOROPLASTIC"/>
    <property type="match status" value="1"/>
</dbReference>
<dbReference type="Pfam" id="PF02130">
    <property type="entry name" value="YbeY"/>
    <property type="match status" value="1"/>
</dbReference>
<dbReference type="SUPFAM" id="SSF55486">
    <property type="entry name" value="Metalloproteases ('zincins'), catalytic domain"/>
    <property type="match status" value="1"/>
</dbReference>
<dbReference type="PROSITE" id="PS01306">
    <property type="entry name" value="UPF0054"/>
    <property type="match status" value="1"/>
</dbReference>
<accession>Q3BS90</accession>
<gene>
    <name evidence="1" type="primary">ybeY</name>
    <name type="ordered locus">XCV2642</name>
</gene>
<proteinExistence type="inferred from homology"/>
<keyword id="KW-0963">Cytoplasm</keyword>
<keyword id="KW-0255">Endonuclease</keyword>
<keyword id="KW-0378">Hydrolase</keyword>
<keyword id="KW-0479">Metal-binding</keyword>
<keyword id="KW-0540">Nuclease</keyword>
<keyword id="KW-0690">Ribosome biogenesis</keyword>
<keyword id="KW-0698">rRNA processing</keyword>
<keyword id="KW-0862">Zinc</keyword>
<feature type="chain" id="PRO_0000284349" description="Endoribonuclease YbeY">
    <location>
        <begin position="1"/>
        <end position="161"/>
    </location>
</feature>
<feature type="binding site" evidence="1">
    <location>
        <position position="121"/>
    </location>
    <ligand>
        <name>Zn(2+)</name>
        <dbReference type="ChEBI" id="CHEBI:29105"/>
        <note>catalytic</note>
    </ligand>
</feature>
<feature type="binding site" evidence="1">
    <location>
        <position position="125"/>
    </location>
    <ligand>
        <name>Zn(2+)</name>
        <dbReference type="ChEBI" id="CHEBI:29105"/>
        <note>catalytic</note>
    </ligand>
</feature>
<feature type="binding site" evidence="1">
    <location>
        <position position="131"/>
    </location>
    <ligand>
        <name>Zn(2+)</name>
        <dbReference type="ChEBI" id="CHEBI:29105"/>
        <note>catalytic</note>
    </ligand>
</feature>
<organism>
    <name type="scientific">Xanthomonas euvesicatoria pv. vesicatoria (strain 85-10)</name>
    <name type="common">Xanthomonas campestris pv. vesicatoria</name>
    <dbReference type="NCBI Taxonomy" id="316273"/>
    <lineage>
        <taxon>Bacteria</taxon>
        <taxon>Pseudomonadati</taxon>
        <taxon>Pseudomonadota</taxon>
        <taxon>Gammaproteobacteria</taxon>
        <taxon>Lysobacterales</taxon>
        <taxon>Lysobacteraceae</taxon>
        <taxon>Xanthomonas</taxon>
    </lineage>
</organism>